<gene>
    <name evidence="1" type="primary">orn</name>
    <name type="ordered locus">Mjls_3645</name>
</gene>
<sequence>MRDELVWIDCEMTGLDLRSDLLIEIAVLVTDADLNILGDGLDVVIHAPDEALDAMIPVVTEMHTRSGLIEEVRASTVDLATAEEMVLDYIRGHVKQAKTAPLAGNSIATDRGFIARDMAKLDDYLHYRMIDVSSIKELCRRWYPRIYFGQPEKGLAHRALADIHESIRELKYYRQTAFVAPPGPSTSDIAAIAAELGPPGKDAADTDSAAGHTTG</sequence>
<keyword id="KW-0963">Cytoplasm</keyword>
<keyword id="KW-0269">Exonuclease</keyword>
<keyword id="KW-0378">Hydrolase</keyword>
<keyword id="KW-0540">Nuclease</keyword>
<name>ORN_MYCSJ</name>
<protein>
    <recommendedName>
        <fullName evidence="1">Oligoribonuclease</fullName>
        <ecNumber evidence="1">3.1.15.-</ecNumber>
    </recommendedName>
</protein>
<reference key="1">
    <citation type="submission" date="2007-02" db="EMBL/GenBank/DDBJ databases">
        <title>Complete sequence of Mycobacterium sp. JLS.</title>
        <authorList>
            <consortium name="US DOE Joint Genome Institute"/>
            <person name="Copeland A."/>
            <person name="Lucas S."/>
            <person name="Lapidus A."/>
            <person name="Barry K."/>
            <person name="Detter J.C."/>
            <person name="Glavina del Rio T."/>
            <person name="Hammon N."/>
            <person name="Israni S."/>
            <person name="Dalin E."/>
            <person name="Tice H."/>
            <person name="Pitluck S."/>
            <person name="Chain P."/>
            <person name="Malfatti S."/>
            <person name="Shin M."/>
            <person name="Vergez L."/>
            <person name="Schmutz J."/>
            <person name="Larimer F."/>
            <person name="Land M."/>
            <person name="Hauser L."/>
            <person name="Kyrpides N."/>
            <person name="Mikhailova N."/>
            <person name="Miller C.D."/>
            <person name="Anderson A.J."/>
            <person name="Sims R.C."/>
            <person name="Richardson P."/>
        </authorList>
    </citation>
    <scope>NUCLEOTIDE SEQUENCE [LARGE SCALE GENOMIC DNA]</scope>
    <source>
        <strain>JLS</strain>
    </source>
</reference>
<organism>
    <name type="scientific">Mycobacterium sp. (strain JLS)</name>
    <dbReference type="NCBI Taxonomy" id="164757"/>
    <lineage>
        <taxon>Bacteria</taxon>
        <taxon>Bacillati</taxon>
        <taxon>Actinomycetota</taxon>
        <taxon>Actinomycetes</taxon>
        <taxon>Mycobacteriales</taxon>
        <taxon>Mycobacteriaceae</taxon>
        <taxon>Mycobacterium</taxon>
    </lineage>
</organism>
<feature type="chain" id="PRO_1000004262" description="Oligoribonuclease">
    <location>
        <begin position="1"/>
        <end position="215"/>
    </location>
</feature>
<feature type="domain" description="Exonuclease" evidence="1">
    <location>
        <begin position="5"/>
        <end position="170"/>
    </location>
</feature>
<feature type="region of interest" description="Disordered" evidence="2">
    <location>
        <begin position="196"/>
        <end position="215"/>
    </location>
</feature>
<feature type="active site" evidence="1">
    <location>
        <position position="127"/>
    </location>
</feature>
<proteinExistence type="inferred from homology"/>
<comment type="function">
    <text evidence="1">3'-to-5' exoribonuclease specific for small oligoribonucleotides.</text>
</comment>
<comment type="subcellular location">
    <subcellularLocation>
        <location evidence="1">Cytoplasm</location>
    </subcellularLocation>
</comment>
<comment type="similarity">
    <text evidence="1">Belongs to the oligoribonuclease family.</text>
</comment>
<accession>A3Q2P5</accession>
<dbReference type="EC" id="3.1.15.-" evidence="1"/>
<dbReference type="EMBL" id="CP000580">
    <property type="protein sequence ID" value="ABN99422.1"/>
    <property type="molecule type" value="Genomic_DNA"/>
</dbReference>
<dbReference type="SMR" id="A3Q2P5"/>
<dbReference type="KEGG" id="mjl:Mjls_3645"/>
<dbReference type="HOGENOM" id="CLU_064761_3_0_11"/>
<dbReference type="BioCyc" id="MSP164757:G1G8C-3678-MONOMER"/>
<dbReference type="GO" id="GO:0005737">
    <property type="term" value="C:cytoplasm"/>
    <property type="evidence" value="ECO:0007669"/>
    <property type="project" value="UniProtKB-SubCell"/>
</dbReference>
<dbReference type="GO" id="GO:0000175">
    <property type="term" value="F:3'-5'-RNA exonuclease activity"/>
    <property type="evidence" value="ECO:0007669"/>
    <property type="project" value="InterPro"/>
</dbReference>
<dbReference type="GO" id="GO:0003676">
    <property type="term" value="F:nucleic acid binding"/>
    <property type="evidence" value="ECO:0007669"/>
    <property type="project" value="InterPro"/>
</dbReference>
<dbReference type="CDD" id="cd06135">
    <property type="entry name" value="Orn"/>
    <property type="match status" value="1"/>
</dbReference>
<dbReference type="FunFam" id="3.30.420.10:FF:000003">
    <property type="entry name" value="Oligoribonuclease"/>
    <property type="match status" value="1"/>
</dbReference>
<dbReference type="Gene3D" id="3.30.420.10">
    <property type="entry name" value="Ribonuclease H-like superfamily/Ribonuclease H"/>
    <property type="match status" value="1"/>
</dbReference>
<dbReference type="HAMAP" id="MF_00045">
    <property type="entry name" value="Oligoribonuclease"/>
    <property type="match status" value="1"/>
</dbReference>
<dbReference type="InterPro" id="IPR013520">
    <property type="entry name" value="Exonuclease_RNaseT/DNA_pol3"/>
</dbReference>
<dbReference type="InterPro" id="IPR022894">
    <property type="entry name" value="Oligoribonuclease"/>
</dbReference>
<dbReference type="InterPro" id="IPR012337">
    <property type="entry name" value="RNaseH-like_sf"/>
</dbReference>
<dbReference type="InterPro" id="IPR036397">
    <property type="entry name" value="RNaseH_sf"/>
</dbReference>
<dbReference type="NCBIfam" id="NF003765">
    <property type="entry name" value="PRK05359.1"/>
    <property type="match status" value="1"/>
</dbReference>
<dbReference type="PANTHER" id="PTHR11046">
    <property type="entry name" value="OLIGORIBONUCLEASE, MITOCHONDRIAL"/>
    <property type="match status" value="1"/>
</dbReference>
<dbReference type="PANTHER" id="PTHR11046:SF0">
    <property type="entry name" value="OLIGORIBONUCLEASE, MITOCHONDRIAL"/>
    <property type="match status" value="1"/>
</dbReference>
<dbReference type="Pfam" id="PF00929">
    <property type="entry name" value="RNase_T"/>
    <property type="match status" value="1"/>
</dbReference>
<dbReference type="SMART" id="SM00479">
    <property type="entry name" value="EXOIII"/>
    <property type="match status" value="1"/>
</dbReference>
<dbReference type="SUPFAM" id="SSF53098">
    <property type="entry name" value="Ribonuclease H-like"/>
    <property type="match status" value="1"/>
</dbReference>
<evidence type="ECO:0000255" key="1">
    <source>
        <dbReference type="HAMAP-Rule" id="MF_00045"/>
    </source>
</evidence>
<evidence type="ECO:0000256" key="2">
    <source>
        <dbReference type="SAM" id="MobiDB-lite"/>
    </source>
</evidence>